<accession>Q9BHB7</accession>
<organism>
    <name type="scientific">Conus textile</name>
    <name type="common">Cloth-of-gold cone</name>
    <dbReference type="NCBI Taxonomy" id="6494"/>
    <lineage>
        <taxon>Eukaryota</taxon>
        <taxon>Metazoa</taxon>
        <taxon>Spiralia</taxon>
        <taxon>Lophotrochozoa</taxon>
        <taxon>Mollusca</taxon>
        <taxon>Gastropoda</taxon>
        <taxon>Caenogastropoda</taxon>
        <taxon>Neogastropoda</taxon>
        <taxon>Conoidea</taxon>
        <taxon>Conidae</taxon>
        <taxon>Conus</taxon>
        <taxon>Cylinder</taxon>
    </lineage>
</organism>
<dbReference type="EMBL" id="AF215018">
    <property type="protein sequence ID" value="AAG60446.1"/>
    <property type="molecule type" value="mRNA"/>
</dbReference>
<dbReference type="EMBL" id="AF215027">
    <property type="protein sequence ID" value="AAG60455.1"/>
    <property type="molecule type" value="mRNA"/>
</dbReference>
<dbReference type="ConoServer" id="705">
    <property type="toxin name" value="TxMEKL-022/TxMEKL-021 precursor"/>
</dbReference>
<dbReference type="GO" id="GO:0005576">
    <property type="term" value="C:extracellular region"/>
    <property type="evidence" value="ECO:0007669"/>
    <property type="project" value="UniProtKB-SubCell"/>
</dbReference>
<dbReference type="GO" id="GO:0008200">
    <property type="term" value="F:ion channel inhibitor activity"/>
    <property type="evidence" value="ECO:0007669"/>
    <property type="project" value="InterPro"/>
</dbReference>
<dbReference type="GO" id="GO:0090729">
    <property type="term" value="F:toxin activity"/>
    <property type="evidence" value="ECO:0007669"/>
    <property type="project" value="UniProtKB-KW"/>
</dbReference>
<dbReference type="InterPro" id="IPR004214">
    <property type="entry name" value="Conotoxin"/>
</dbReference>
<dbReference type="Pfam" id="PF02950">
    <property type="entry name" value="Conotoxin"/>
    <property type="match status" value="1"/>
</dbReference>
<comment type="subcellular location">
    <subcellularLocation>
        <location evidence="1">Secreted</location>
    </subcellularLocation>
</comment>
<comment type="tissue specificity">
    <text>Expressed by the venom duct.</text>
</comment>
<comment type="domain">
    <text evidence="1">The presence of a 'disulfide through disulfide knot' structurally defines this protein as a knottin.</text>
</comment>
<comment type="domain">
    <text>The cysteine framework is VI/VII (C-C-CC-C-C).</text>
</comment>
<comment type="similarity">
    <text evidence="3">Belongs to the conotoxin O2 superfamily.</text>
</comment>
<sequence length="79" mass="8915">MEKLTILLLVAVVLMSTQALPQGGGEKRPRENIRFLSKRKSNAERWREGSCTSWLATCTDASQCCTGVCYKRAYCALWE</sequence>
<keyword id="KW-1015">Disulfide bond</keyword>
<keyword id="KW-0960">Knottin</keyword>
<keyword id="KW-0528">Neurotoxin</keyword>
<keyword id="KW-0964">Secreted</keyword>
<keyword id="KW-0732">Signal</keyword>
<keyword id="KW-0800">Toxin</keyword>
<name>O261_CONTE</name>
<proteinExistence type="evidence at transcript level"/>
<evidence type="ECO:0000250" key="1"/>
<evidence type="ECO:0000255" key="2"/>
<evidence type="ECO:0000305" key="3"/>
<feature type="signal peptide" evidence="2">
    <location>
        <begin position="1"/>
        <end position="19"/>
    </location>
</feature>
<feature type="propeptide" id="PRO_0000404786" evidence="2">
    <location>
        <begin position="20"/>
        <end position="47"/>
    </location>
</feature>
<feature type="peptide" id="PRO_0000404787" description="Conotoxin TxMEKL-021" evidence="2">
    <location>
        <begin position="48"/>
        <end position="79"/>
    </location>
</feature>
<feature type="disulfide bond" evidence="1">
    <location>
        <begin position="51"/>
        <end position="65"/>
    </location>
</feature>
<feature type="disulfide bond" evidence="1">
    <location>
        <begin position="58"/>
        <end position="69"/>
    </location>
</feature>
<feature type="disulfide bond" evidence="1">
    <location>
        <begin position="64"/>
        <end position="75"/>
    </location>
</feature>
<reference key="1">
    <citation type="journal article" date="2001" name="Mol. Biol. Evol.">
        <title>Mechanisms for evolving hypervariability: the case of conopeptides.</title>
        <authorList>
            <person name="Conticello S.G."/>
            <person name="Gilad Y."/>
            <person name="Avidan N."/>
            <person name="Ben-Asher E."/>
            <person name="Levy Z."/>
            <person name="Fainzilber M."/>
        </authorList>
    </citation>
    <scope>NUCLEOTIDE SEQUENCE [MRNA]</scope>
    <source>
        <tissue>Venom duct</tissue>
    </source>
</reference>
<protein>
    <recommendedName>
        <fullName>Conotoxin TxMEKL-021</fullName>
    </recommendedName>
    <alternativeName>
        <fullName>Conotoxin TxMEKL-022</fullName>
    </alternativeName>
</protein>